<feature type="chain" id="PRO_0000286062" description="Protein Shroom1">
    <location>
        <begin position="1"/>
        <end position="823"/>
    </location>
</feature>
<feature type="domain" description="ASD1" evidence="3">
    <location>
        <begin position="145"/>
        <end position="233"/>
    </location>
</feature>
<feature type="domain" description="ASD2" evidence="4">
    <location>
        <begin position="517"/>
        <end position="796"/>
    </location>
</feature>
<feature type="region of interest" description="Disordered" evidence="5">
    <location>
        <begin position="1"/>
        <end position="55"/>
    </location>
</feature>
<feature type="region of interest" description="Disordered" evidence="5">
    <location>
        <begin position="72"/>
        <end position="110"/>
    </location>
</feature>
<feature type="region of interest" description="Disordered" evidence="5">
    <location>
        <begin position="124"/>
        <end position="159"/>
    </location>
</feature>
<feature type="region of interest" description="Disordered" evidence="5">
    <location>
        <begin position="181"/>
        <end position="200"/>
    </location>
</feature>
<feature type="region of interest" description="Disordered" evidence="5">
    <location>
        <begin position="270"/>
        <end position="303"/>
    </location>
</feature>
<feature type="region of interest" description="Disordered" evidence="5">
    <location>
        <begin position="349"/>
        <end position="375"/>
    </location>
</feature>
<feature type="region of interest" description="Disordered" evidence="5">
    <location>
        <begin position="420"/>
        <end position="503"/>
    </location>
</feature>
<feature type="region of interest" description="Disordered" evidence="5">
    <location>
        <begin position="566"/>
        <end position="620"/>
    </location>
</feature>
<feature type="compositionally biased region" description="Polar residues" evidence="5">
    <location>
        <begin position="28"/>
        <end position="50"/>
    </location>
</feature>
<feature type="compositionally biased region" description="Polar residues" evidence="5">
    <location>
        <begin position="72"/>
        <end position="85"/>
    </location>
</feature>
<feature type="compositionally biased region" description="Polar residues" evidence="5">
    <location>
        <begin position="444"/>
        <end position="468"/>
    </location>
</feature>
<feature type="compositionally biased region" description="Polar residues" evidence="5">
    <location>
        <begin position="489"/>
        <end position="503"/>
    </location>
</feature>
<feature type="compositionally biased region" description="Polar residues" evidence="5">
    <location>
        <begin position="586"/>
        <end position="620"/>
    </location>
</feature>
<feature type="modified residue" description="N-acetylmethionine" evidence="2">
    <location>
        <position position="1"/>
    </location>
</feature>
<feature type="modified residue" description="Phosphoserine" evidence="8">
    <location>
        <position position="103"/>
    </location>
</feature>
<feature type="modified residue" description="Phosphoserine" evidence="2">
    <location>
        <position position="133"/>
    </location>
</feature>
<feature type="modified residue" description="Phosphoserine" evidence="2">
    <location>
        <position position="137"/>
    </location>
</feature>
<feature type="modified residue" description="Phosphoserine" evidence="2">
    <location>
        <position position="166"/>
    </location>
</feature>
<feature type="modified residue" description="Phosphoserine" evidence="2">
    <location>
        <position position="190"/>
    </location>
</feature>
<feature type="modified residue" description="Phosphoserine" evidence="2">
    <location>
        <position position="224"/>
    </location>
</feature>
<feature type="modified residue" description="Phosphothreonine" evidence="8 9">
    <location>
        <position position="383"/>
    </location>
</feature>
<feature type="modified residue" description="Phosphoserine" evidence="8 9">
    <location>
        <position position="385"/>
    </location>
</feature>
<feature type="splice variant" id="VSP_024963" description="In isoform 2." evidence="6">
    <location>
        <begin position="332"/>
        <end position="394"/>
    </location>
</feature>
<dbReference type="EMBL" id="AL596095">
    <property type="status" value="NOT_ANNOTATED_CDS"/>
    <property type="molecule type" value="Genomic_DNA"/>
</dbReference>
<dbReference type="EMBL" id="BC005761">
    <property type="protein sequence ID" value="AAH05761.1"/>
    <property type="molecule type" value="mRNA"/>
</dbReference>
<dbReference type="EMBL" id="BC031598">
    <property type="protein sequence ID" value="AAH31598.1"/>
    <property type="molecule type" value="mRNA"/>
</dbReference>
<dbReference type="CCDS" id="CCDS24680.2">
    <molecule id="Q5SX79-1"/>
</dbReference>
<dbReference type="CCDS" id="CCDS70182.1">
    <molecule id="Q5SX79-2"/>
</dbReference>
<dbReference type="RefSeq" id="NP_001277718.1">
    <molecule id="Q5SX79-2"/>
    <property type="nucleotide sequence ID" value="NM_001290789.1"/>
</dbReference>
<dbReference type="RefSeq" id="NP_082193.2">
    <molecule id="Q5SX79-1"/>
    <property type="nucleotide sequence ID" value="NM_027917.3"/>
</dbReference>
<dbReference type="SMR" id="Q5SX79"/>
<dbReference type="BioGRID" id="214917">
    <property type="interactions" value="1"/>
</dbReference>
<dbReference type="FunCoup" id="Q5SX79">
    <property type="interactions" value="9"/>
</dbReference>
<dbReference type="STRING" id="10090.ENSMUSP00000104641"/>
<dbReference type="GlyGen" id="Q5SX79">
    <property type="glycosylation" value="3 sites, 1 N-linked glycan (1 site), 1 O-linked glycan (1 site)"/>
</dbReference>
<dbReference type="iPTMnet" id="Q5SX79"/>
<dbReference type="PhosphoSitePlus" id="Q5SX79"/>
<dbReference type="PaxDb" id="10090-ENSMUSP00000104641"/>
<dbReference type="ProteomicsDB" id="257160">
    <molecule id="Q5SX79-1"/>
</dbReference>
<dbReference type="ProteomicsDB" id="257161">
    <molecule id="Q5SX79-2"/>
</dbReference>
<dbReference type="Antibodypedia" id="64246">
    <property type="antibodies" value="50 antibodies from 21 providers"/>
</dbReference>
<dbReference type="DNASU" id="71774"/>
<dbReference type="Ensembl" id="ENSMUST00000018531.12">
    <molecule id="Q5SX79-2"/>
    <property type="protein sequence ID" value="ENSMUSP00000018531.6"/>
    <property type="gene ID" value="ENSMUSG00000018387.13"/>
</dbReference>
<dbReference type="Ensembl" id="ENSMUST00000109013.9">
    <molecule id="Q5SX79-1"/>
    <property type="protein sequence ID" value="ENSMUSP00000104641.3"/>
    <property type="gene ID" value="ENSMUSG00000018387.13"/>
</dbReference>
<dbReference type="GeneID" id="71774"/>
<dbReference type="KEGG" id="mmu:71774"/>
<dbReference type="UCSC" id="uc007iwc.2">
    <molecule id="Q5SX79-1"/>
    <property type="organism name" value="mouse"/>
</dbReference>
<dbReference type="UCSC" id="uc007iwd.2">
    <molecule id="Q5SX79-2"/>
    <property type="organism name" value="mouse"/>
</dbReference>
<dbReference type="AGR" id="MGI:1919024"/>
<dbReference type="CTD" id="134549"/>
<dbReference type="MGI" id="MGI:1919024">
    <property type="gene designation" value="Shroom1"/>
</dbReference>
<dbReference type="VEuPathDB" id="HostDB:ENSMUSG00000018387"/>
<dbReference type="eggNOG" id="ENOG502SM3B">
    <property type="taxonomic scope" value="Eukaryota"/>
</dbReference>
<dbReference type="GeneTree" id="ENSGT00940000160656"/>
<dbReference type="HOGENOM" id="CLU_016932_0_0_1"/>
<dbReference type="InParanoid" id="Q5SX79"/>
<dbReference type="OMA" id="CEQRASE"/>
<dbReference type="OrthoDB" id="10063560at2759"/>
<dbReference type="PhylomeDB" id="Q5SX79"/>
<dbReference type="TreeFam" id="TF335754"/>
<dbReference type="BioGRID-ORCS" id="71774">
    <property type="hits" value="2 hits in 76 CRISPR screens"/>
</dbReference>
<dbReference type="ChiTaRS" id="Shroom1">
    <property type="organism name" value="mouse"/>
</dbReference>
<dbReference type="PRO" id="PR:Q5SX79"/>
<dbReference type="Proteomes" id="UP000000589">
    <property type="component" value="Chromosome 11"/>
</dbReference>
<dbReference type="RNAct" id="Q5SX79">
    <property type="molecule type" value="protein"/>
</dbReference>
<dbReference type="Bgee" id="ENSMUSG00000018387">
    <property type="expression patterns" value="Expressed in ectoplacental cone and 71 other cell types or tissues"/>
</dbReference>
<dbReference type="ExpressionAtlas" id="Q5SX79">
    <property type="expression patterns" value="baseline and differential"/>
</dbReference>
<dbReference type="GO" id="GO:0005737">
    <property type="term" value="C:cytoplasm"/>
    <property type="evidence" value="ECO:0007669"/>
    <property type="project" value="UniProtKB-KW"/>
</dbReference>
<dbReference type="GO" id="GO:0005874">
    <property type="term" value="C:microtubule"/>
    <property type="evidence" value="ECO:0007669"/>
    <property type="project" value="UniProtKB-KW"/>
</dbReference>
<dbReference type="GO" id="GO:0051015">
    <property type="term" value="F:actin filament binding"/>
    <property type="evidence" value="ECO:0000314"/>
    <property type="project" value="UniProtKB"/>
</dbReference>
<dbReference type="GO" id="GO:0045159">
    <property type="term" value="F:myosin II binding"/>
    <property type="evidence" value="ECO:0000314"/>
    <property type="project" value="UniProtKB"/>
</dbReference>
<dbReference type="GO" id="GO:0051017">
    <property type="term" value="P:actin filament bundle assembly"/>
    <property type="evidence" value="ECO:0000314"/>
    <property type="project" value="UniProtKB"/>
</dbReference>
<dbReference type="GO" id="GO:0000902">
    <property type="term" value="P:cell morphogenesis"/>
    <property type="evidence" value="ECO:0000314"/>
    <property type="project" value="UniProtKB"/>
</dbReference>
<dbReference type="Gene3D" id="6.10.250.3120">
    <property type="match status" value="1"/>
</dbReference>
<dbReference type="InterPro" id="IPR014800">
    <property type="entry name" value="ASD1_dom"/>
</dbReference>
<dbReference type="InterPro" id="IPR014799">
    <property type="entry name" value="ASD2_dom"/>
</dbReference>
<dbReference type="InterPro" id="IPR027685">
    <property type="entry name" value="Shroom_fam"/>
</dbReference>
<dbReference type="PANTHER" id="PTHR15012">
    <property type="entry name" value="APICAL PROTEIN/SHROOM-RELATED"/>
    <property type="match status" value="1"/>
</dbReference>
<dbReference type="PANTHER" id="PTHR15012:SF37">
    <property type="entry name" value="PROTEIN SHROOM1"/>
    <property type="match status" value="1"/>
</dbReference>
<dbReference type="Pfam" id="PF08688">
    <property type="entry name" value="ASD1"/>
    <property type="match status" value="1"/>
</dbReference>
<dbReference type="Pfam" id="PF08687">
    <property type="entry name" value="ASD2"/>
    <property type="match status" value="1"/>
</dbReference>
<dbReference type="PROSITE" id="PS51306">
    <property type="entry name" value="ASD1"/>
    <property type="match status" value="1"/>
</dbReference>
<dbReference type="PROSITE" id="PS51307">
    <property type="entry name" value="ASD2"/>
    <property type="match status" value="1"/>
</dbReference>
<keyword id="KW-0007">Acetylation</keyword>
<keyword id="KW-0009">Actin-binding</keyword>
<keyword id="KW-0025">Alternative splicing</keyword>
<keyword id="KW-0963">Cytoplasm</keyword>
<keyword id="KW-0206">Cytoskeleton</keyword>
<keyword id="KW-0493">Microtubule</keyword>
<keyword id="KW-0597">Phosphoprotein</keyword>
<keyword id="KW-1185">Reference proteome</keyword>
<name>SHRM1_MOUSE</name>
<gene>
    <name type="primary">Shroom1</name>
</gene>
<comment type="function">
    <text evidence="1">May be involved in the assembly of microtubule arrays during cell elongation.</text>
</comment>
<comment type="subunit">
    <text evidence="1">Interacts with F-actin.</text>
</comment>
<comment type="subcellular location">
    <subcellularLocation>
        <location evidence="1">Cytoplasm</location>
        <location evidence="1">Cytoskeleton</location>
    </subcellularLocation>
</comment>
<comment type="alternative products">
    <event type="alternative splicing"/>
    <isoform>
        <id>Q5SX79-1</id>
        <name>1</name>
        <sequence type="displayed"/>
    </isoform>
    <isoform>
        <id>Q5SX79-2</id>
        <name>2</name>
        <sequence type="described" ref="VSP_024963"/>
    </isoform>
</comment>
<comment type="domain">
    <text evidence="1">The ASD1 domain mediates F-actin binding.</text>
</comment>
<comment type="similarity">
    <text evidence="7">Belongs to the shroom family.</text>
</comment>
<proteinExistence type="evidence at protein level"/>
<organism>
    <name type="scientific">Mus musculus</name>
    <name type="common">Mouse</name>
    <dbReference type="NCBI Taxonomy" id="10090"/>
    <lineage>
        <taxon>Eukaryota</taxon>
        <taxon>Metazoa</taxon>
        <taxon>Chordata</taxon>
        <taxon>Craniata</taxon>
        <taxon>Vertebrata</taxon>
        <taxon>Euteleostomi</taxon>
        <taxon>Mammalia</taxon>
        <taxon>Eutheria</taxon>
        <taxon>Euarchontoglires</taxon>
        <taxon>Glires</taxon>
        <taxon>Rodentia</taxon>
        <taxon>Myomorpha</taxon>
        <taxon>Muroidea</taxon>
        <taxon>Muridae</taxon>
        <taxon>Murinae</taxon>
        <taxon>Mus</taxon>
        <taxon>Mus</taxon>
    </lineage>
</organism>
<reference key="1">
    <citation type="journal article" date="2009" name="PLoS Biol.">
        <title>Lineage-specific biology revealed by a finished genome assembly of the mouse.</title>
        <authorList>
            <person name="Church D.M."/>
            <person name="Goodstadt L."/>
            <person name="Hillier L.W."/>
            <person name="Zody M.C."/>
            <person name="Goldstein S."/>
            <person name="She X."/>
            <person name="Bult C.J."/>
            <person name="Agarwala R."/>
            <person name="Cherry J.L."/>
            <person name="DiCuccio M."/>
            <person name="Hlavina W."/>
            <person name="Kapustin Y."/>
            <person name="Meric P."/>
            <person name="Maglott D."/>
            <person name="Birtle Z."/>
            <person name="Marques A.C."/>
            <person name="Graves T."/>
            <person name="Zhou S."/>
            <person name="Teague B."/>
            <person name="Potamousis K."/>
            <person name="Churas C."/>
            <person name="Place M."/>
            <person name="Herschleb J."/>
            <person name="Runnheim R."/>
            <person name="Forrest D."/>
            <person name="Amos-Landgraf J."/>
            <person name="Schwartz D.C."/>
            <person name="Cheng Z."/>
            <person name="Lindblad-Toh K."/>
            <person name="Eichler E.E."/>
            <person name="Ponting C.P."/>
        </authorList>
    </citation>
    <scope>NUCLEOTIDE SEQUENCE [LARGE SCALE GENOMIC DNA]</scope>
    <source>
        <strain>C57BL/6J</strain>
    </source>
</reference>
<reference key="2">
    <citation type="journal article" date="2004" name="Genome Res.">
        <title>The status, quality, and expansion of the NIH full-length cDNA project: the Mammalian Gene Collection (MGC).</title>
        <authorList>
            <consortium name="The MGC Project Team"/>
        </authorList>
    </citation>
    <scope>NUCLEOTIDE SEQUENCE [LARGE SCALE MRNA] (ISOFORM 2)</scope>
    <source>
        <strain>FVB/N</strain>
        <tissue>Mammary tumor</tissue>
    </source>
</reference>
<reference key="3">
    <citation type="journal article" date="2007" name="Proc. Natl. Acad. Sci. U.S.A.">
        <title>Large-scale phosphorylation analysis of mouse liver.</title>
        <authorList>
            <person name="Villen J."/>
            <person name="Beausoleil S.A."/>
            <person name="Gerber S.A."/>
            <person name="Gygi S.P."/>
        </authorList>
    </citation>
    <scope>PHOSPHORYLATION [LARGE SCALE ANALYSIS] AT SER-103; THR-383 AND SER-385</scope>
    <scope>IDENTIFICATION BY MASS SPECTROMETRY [LARGE SCALE ANALYSIS]</scope>
    <source>
        <tissue>Liver</tissue>
    </source>
</reference>
<reference key="4">
    <citation type="journal article" date="2010" name="Cell">
        <title>A tissue-specific atlas of mouse protein phosphorylation and expression.</title>
        <authorList>
            <person name="Huttlin E.L."/>
            <person name="Jedrychowski M.P."/>
            <person name="Elias J.E."/>
            <person name="Goswami T."/>
            <person name="Rad R."/>
            <person name="Beausoleil S.A."/>
            <person name="Villen J."/>
            <person name="Haas W."/>
            <person name="Sowa M.E."/>
            <person name="Gygi S.P."/>
        </authorList>
    </citation>
    <scope>PHOSPHORYLATION [LARGE SCALE ANALYSIS] AT THR-383 AND SER-385</scope>
    <scope>IDENTIFICATION BY MASS SPECTROMETRY [LARGE SCALE ANALYSIS]</scope>
    <source>
        <tissue>Liver</tissue>
    </source>
</reference>
<sequence>MEALGTGRDRTSQASATESLDLRRLSTRADSAYSSFSTASGDPETRTPSPGTERLPYLDWDYVRVVWGSQSPTSKDAVLSTTQRPVQAVAGHSDPRSPEVQGSPGPLNRQDTPLLYALAAEAEATAHTAEPPSPPASRDAYRQRLQGAQRRVLRETSFQRKEFRMSLPGRLRPAVPTRLPTAHVRSASSSQELGEEEPARTAVPALAAAGRGRLSSQQRQCCFSEPGKLHRVGWSGGPTGEDLRKDYSTQELQRGMHAKSKGLLETQSLSSTELNSGPADLGNAHRPAGRSQSVSGEVMGPCKGSERTVATVQAVPQRADIRRPLLHTKLSRSLTQKEVTGVCPGEALQTKPAGCGRRISETSVSTPGPSLPEDDVFLREAKTPSPQDSQGLPTSTSYRQYENDLSKKAGQIAVSAERPLHETPGITGTEDCGQAVNGSVDLSRPTSIPETTNDDIPTFDTNGTTDPSAATEKKPLKPPPVDVLRPSDSETPGSPHHTSLTWGQFDSKTTWPSRHFEALVQELARLDPSLSRTLAAQPGPEPPQGLLDGLFPVEEIRSAMRPALEEMGEKAAGASEEGSCGHHLTQDLQTSQEASRSENSTPDPDQSSGQEFPEGNSTQAKKVELARLLQKMLQDLHAEQERLRGTAADWTQRNGALEAAVSQACTPRELERFRRFMTDLERVLGLLLLLGSRLVRVNLALARAGSNSDPDERASLLQRLQLLQRQQEEAKELKEHVARREQTLRQVLERELPAEHLRSYCVLLASKARILSQQRSLDDRIRFLKDQLDTIWSDLSHHPLSPRLTWAPAIRPLNKQPFLATLI</sequence>
<evidence type="ECO:0000250" key="1"/>
<evidence type="ECO:0000250" key="2">
    <source>
        <dbReference type="UniProtKB" id="Q2M3G4"/>
    </source>
</evidence>
<evidence type="ECO:0000255" key="3">
    <source>
        <dbReference type="PROSITE-ProRule" id="PRU00637"/>
    </source>
</evidence>
<evidence type="ECO:0000255" key="4">
    <source>
        <dbReference type="PROSITE-ProRule" id="PRU00638"/>
    </source>
</evidence>
<evidence type="ECO:0000256" key="5">
    <source>
        <dbReference type="SAM" id="MobiDB-lite"/>
    </source>
</evidence>
<evidence type="ECO:0000303" key="6">
    <source>
    </source>
</evidence>
<evidence type="ECO:0000305" key="7"/>
<evidence type="ECO:0007744" key="8">
    <source>
    </source>
</evidence>
<evidence type="ECO:0007744" key="9">
    <source>
    </source>
</evidence>
<protein>
    <recommendedName>
        <fullName>Protein Shroom1</fullName>
    </recommendedName>
</protein>
<accession>Q5SX79</accession>
<accession>B1AQY5</accession>
<accession>B1AQY6</accession>
<accession>Q5SX83</accession>
<accession>Q99JP8</accession>